<comment type="function">
    <text evidence="1">Methylates ribosomal protein L11.</text>
</comment>
<comment type="catalytic activity">
    <reaction evidence="1">
        <text>L-lysyl-[protein] + 3 S-adenosyl-L-methionine = N(6),N(6),N(6)-trimethyl-L-lysyl-[protein] + 3 S-adenosyl-L-homocysteine + 3 H(+)</text>
        <dbReference type="Rhea" id="RHEA:54192"/>
        <dbReference type="Rhea" id="RHEA-COMP:9752"/>
        <dbReference type="Rhea" id="RHEA-COMP:13826"/>
        <dbReference type="ChEBI" id="CHEBI:15378"/>
        <dbReference type="ChEBI" id="CHEBI:29969"/>
        <dbReference type="ChEBI" id="CHEBI:57856"/>
        <dbReference type="ChEBI" id="CHEBI:59789"/>
        <dbReference type="ChEBI" id="CHEBI:61961"/>
    </reaction>
</comment>
<comment type="subcellular location">
    <subcellularLocation>
        <location evidence="1">Cytoplasm</location>
    </subcellularLocation>
</comment>
<comment type="similarity">
    <text evidence="1">Belongs to the methyltransferase superfamily. PrmA family.</text>
</comment>
<accession>Q5X9S8</accession>
<proteinExistence type="inferred from homology"/>
<reference key="1">
    <citation type="journal article" date="2004" name="J. Infect. Dis.">
        <title>Progress toward characterization of the group A Streptococcus metagenome: complete genome sequence of a macrolide-resistant serotype M6 strain.</title>
        <authorList>
            <person name="Banks D.J."/>
            <person name="Porcella S.F."/>
            <person name="Barbian K.D."/>
            <person name="Beres S.B."/>
            <person name="Philips L.E."/>
            <person name="Voyich J.M."/>
            <person name="DeLeo F.R."/>
            <person name="Martin J.M."/>
            <person name="Somerville G.A."/>
            <person name="Musser J.M."/>
        </authorList>
    </citation>
    <scope>NUCLEOTIDE SEQUENCE [LARGE SCALE GENOMIC DNA]</scope>
    <source>
        <strain>ATCC BAA-946 / MGAS10394</strain>
    </source>
</reference>
<gene>
    <name evidence="1" type="primary">prmA</name>
    <name type="ordered locus">M6_Spy1700</name>
</gene>
<organism>
    <name type="scientific">Streptococcus pyogenes serotype M6 (strain ATCC BAA-946 / MGAS10394)</name>
    <dbReference type="NCBI Taxonomy" id="286636"/>
    <lineage>
        <taxon>Bacteria</taxon>
        <taxon>Bacillati</taxon>
        <taxon>Bacillota</taxon>
        <taxon>Bacilli</taxon>
        <taxon>Lactobacillales</taxon>
        <taxon>Streptococcaceae</taxon>
        <taxon>Streptococcus</taxon>
    </lineage>
</organism>
<evidence type="ECO:0000255" key="1">
    <source>
        <dbReference type="HAMAP-Rule" id="MF_00735"/>
    </source>
</evidence>
<keyword id="KW-0963">Cytoplasm</keyword>
<keyword id="KW-0489">Methyltransferase</keyword>
<keyword id="KW-0949">S-adenosyl-L-methionine</keyword>
<keyword id="KW-0808">Transferase</keyword>
<feature type="chain" id="PRO_0000192320" description="Ribosomal protein L11 methyltransferase">
    <location>
        <begin position="1"/>
        <end position="317"/>
    </location>
</feature>
<feature type="binding site" evidence="1">
    <location>
        <position position="158"/>
    </location>
    <ligand>
        <name>S-adenosyl-L-methionine</name>
        <dbReference type="ChEBI" id="CHEBI:59789"/>
    </ligand>
</feature>
<feature type="binding site" evidence="1">
    <location>
        <position position="179"/>
    </location>
    <ligand>
        <name>S-adenosyl-L-methionine</name>
        <dbReference type="ChEBI" id="CHEBI:59789"/>
    </ligand>
</feature>
<feature type="binding site" evidence="1">
    <location>
        <position position="201"/>
    </location>
    <ligand>
        <name>S-adenosyl-L-methionine</name>
        <dbReference type="ChEBI" id="CHEBI:59789"/>
    </ligand>
</feature>
<feature type="binding site" evidence="1">
    <location>
        <position position="244"/>
    </location>
    <ligand>
        <name>S-adenosyl-L-methionine</name>
        <dbReference type="ChEBI" id="CHEBI:59789"/>
    </ligand>
</feature>
<dbReference type="EC" id="2.1.1.-" evidence="1"/>
<dbReference type="EMBL" id="CP000003">
    <property type="protein sequence ID" value="AAT87835.1"/>
    <property type="molecule type" value="Genomic_DNA"/>
</dbReference>
<dbReference type="RefSeq" id="WP_011185002.1">
    <property type="nucleotide sequence ID" value="NC_006086.1"/>
</dbReference>
<dbReference type="SMR" id="Q5X9S8"/>
<dbReference type="KEGG" id="spa:M6_Spy1700"/>
<dbReference type="HOGENOM" id="CLU_049382_0_1_9"/>
<dbReference type="Proteomes" id="UP000001167">
    <property type="component" value="Chromosome"/>
</dbReference>
<dbReference type="GO" id="GO:0005737">
    <property type="term" value="C:cytoplasm"/>
    <property type="evidence" value="ECO:0007669"/>
    <property type="project" value="UniProtKB-SubCell"/>
</dbReference>
<dbReference type="GO" id="GO:0016279">
    <property type="term" value="F:protein-lysine N-methyltransferase activity"/>
    <property type="evidence" value="ECO:0007669"/>
    <property type="project" value="RHEA"/>
</dbReference>
<dbReference type="GO" id="GO:0032259">
    <property type="term" value="P:methylation"/>
    <property type="evidence" value="ECO:0007669"/>
    <property type="project" value="UniProtKB-KW"/>
</dbReference>
<dbReference type="CDD" id="cd02440">
    <property type="entry name" value="AdoMet_MTases"/>
    <property type="match status" value="1"/>
</dbReference>
<dbReference type="Gene3D" id="3.40.50.150">
    <property type="entry name" value="Vaccinia Virus protein VP39"/>
    <property type="match status" value="1"/>
</dbReference>
<dbReference type="HAMAP" id="MF_00735">
    <property type="entry name" value="Methyltr_PrmA"/>
    <property type="match status" value="1"/>
</dbReference>
<dbReference type="InterPro" id="IPR050078">
    <property type="entry name" value="Ribosomal_L11_MeTrfase_PrmA"/>
</dbReference>
<dbReference type="InterPro" id="IPR004498">
    <property type="entry name" value="Ribosomal_PrmA_MeTrfase"/>
</dbReference>
<dbReference type="InterPro" id="IPR029063">
    <property type="entry name" value="SAM-dependent_MTases_sf"/>
</dbReference>
<dbReference type="NCBIfam" id="TIGR00406">
    <property type="entry name" value="prmA"/>
    <property type="match status" value="1"/>
</dbReference>
<dbReference type="PANTHER" id="PTHR43648">
    <property type="entry name" value="ELECTRON TRANSFER FLAVOPROTEIN BETA SUBUNIT LYSINE METHYLTRANSFERASE"/>
    <property type="match status" value="1"/>
</dbReference>
<dbReference type="PANTHER" id="PTHR43648:SF1">
    <property type="entry name" value="ELECTRON TRANSFER FLAVOPROTEIN BETA SUBUNIT LYSINE METHYLTRANSFERASE"/>
    <property type="match status" value="1"/>
</dbReference>
<dbReference type="Pfam" id="PF06325">
    <property type="entry name" value="PrmA"/>
    <property type="match status" value="1"/>
</dbReference>
<dbReference type="PIRSF" id="PIRSF000401">
    <property type="entry name" value="RPL11_MTase"/>
    <property type="match status" value="1"/>
</dbReference>
<dbReference type="SUPFAM" id="SSF53335">
    <property type="entry name" value="S-adenosyl-L-methionine-dependent methyltransferases"/>
    <property type="match status" value="1"/>
</dbReference>
<sequence>METWQEVTVHVHRDAQEAVSYVLIETGSQGVAIADSADYIGQKDRFGELYPDVEQSDMIAITAYYPSSTNLADVIATINEQLAELASFGLQVGQVTVDSQELAEEDWADNWKKYYEPARITHDLTIVPSWTAYDASAGEKVIKLDPGMAFGTGTHPTTKMSLFALEQILRGGETVIDVGTGSGVLSIASSLLGAKTIYAYDLDDVAVRVAQENIDLNQGTDNIHVAAGDLLKGVSQEADVIVANILADILVLLTDDAYRLVKKEGYLILSGIISEKLDMVLEAAFSAGFFLETHMVQGEWNALVFKKTDDISGVIGG</sequence>
<name>PRMA_STRP6</name>
<protein>
    <recommendedName>
        <fullName evidence="1">Ribosomal protein L11 methyltransferase</fullName>
        <shortName evidence="1">L11 Mtase</shortName>
        <ecNumber evidence="1">2.1.1.-</ecNumber>
    </recommendedName>
</protein>